<protein>
    <recommendedName>
        <fullName>Uncharacterized protein in proC 3'region</fullName>
    </recommendedName>
    <alternativeName>
        <fullName>ORF3</fullName>
    </alternativeName>
</protein>
<evidence type="ECO:0000255" key="1"/>
<evidence type="ECO:0000305" key="2"/>
<proteinExistence type="inferred from homology"/>
<feature type="chain" id="PRO_0000169380" description="Uncharacterized protein in proC 3'region">
    <location>
        <begin position="1"/>
        <end position="185"/>
    </location>
</feature>
<feature type="transmembrane region" description="Helical" evidence="1">
    <location>
        <begin position="5"/>
        <end position="25"/>
    </location>
</feature>
<feature type="transmembrane region" description="Helical" evidence="1">
    <location>
        <begin position="63"/>
        <end position="83"/>
    </location>
</feature>
<feature type="transmembrane region" description="Helical" evidence="1">
    <location>
        <begin position="97"/>
        <end position="117"/>
    </location>
</feature>
<feature type="transmembrane region" description="Helical" evidence="1">
    <location>
        <begin position="149"/>
        <end position="169"/>
    </location>
</feature>
<keyword id="KW-1003">Cell membrane</keyword>
<keyword id="KW-0472">Membrane</keyword>
<keyword id="KW-0812">Transmembrane</keyword>
<keyword id="KW-1133">Transmembrane helix</keyword>
<dbReference type="EMBL" id="D50472">
    <property type="protein sequence ID" value="BAA09064.1"/>
    <property type="molecule type" value="Genomic_DNA"/>
</dbReference>
<dbReference type="RefSeq" id="WP_012841393.1">
    <property type="nucleotide sequence ID" value="NZ_JAPXVN010000005.1"/>
</dbReference>
<dbReference type="STRING" id="663.BAU10_12665"/>
<dbReference type="TCDB" id="9.A.4.1.1">
    <property type="family name" value="the yggt or fanciful k(+) uptake-b (fkub, yggt) family"/>
</dbReference>
<dbReference type="GeneID" id="57839637"/>
<dbReference type="eggNOG" id="COG0762">
    <property type="taxonomic scope" value="Bacteria"/>
</dbReference>
<dbReference type="GO" id="GO:0005886">
    <property type="term" value="C:plasma membrane"/>
    <property type="evidence" value="ECO:0007669"/>
    <property type="project" value="UniProtKB-SubCell"/>
</dbReference>
<dbReference type="InterPro" id="IPR003425">
    <property type="entry name" value="CCB3/YggT"/>
</dbReference>
<dbReference type="PANTHER" id="PTHR33219:SF14">
    <property type="entry name" value="PROTEIN COFACTOR ASSEMBLY OF COMPLEX C SUBUNIT B CCB3, CHLOROPLASTIC-RELATED"/>
    <property type="match status" value="1"/>
</dbReference>
<dbReference type="PANTHER" id="PTHR33219">
    <property type="entry name" value="YLMG HOMOLOG PROTEIN 2, CHLOROPLASTIC"/>
    <property type="match status" value="1"/>
</dbReference>
<dbReference type="Pfam" id="PF02325">
    <property type="entry name" value="YGGT"/>
    <property type="match status" value="2"/>
</dbReference>
<accession>P52059</accession>
<comment type="subcellular location">
    <subcellularLocation>
        <location evidence="2">Cell membrane</location>
        <topology evidence="2">Multi-pass membrane protein</topology>
    </subcellularLocation>
</comment>
<comment type="similarity">
    <text evidence="2">Belongs to the YggT family.</text>
</comment>
<name>YPI3_VIBAL</name>
<organism>
    <name type="scientific">Vibrio alginolyticus</name>
    <dbReference type="NCBI Taxonomy" id="663"/>
    <lineage>
        <taxon>Bacteria</taxon>
        <taxon>Pseudomonadati</taxon>
        <taxon>Pseudomonadota</taxon>
        <taxon>Gammaproteobacteria</taxon>
        <taxon>Vibrionales</taxon>
        <taxon>Vibrionaceae</taxon>
        <taxon>Vibrio</taxon>
    </lineage>
</organism>
<reference key="1">
    <citation type="journal article" date="1996" name="Biochim. Biophys. Acta">
        <title>Cloning and sequencing of novel genes from Vibrio alginolyticus that support the growth of K+ uptake-deficient mutant of Escherichia coli.</title>
        <authorList>
            <person name="Nakamura T."/>
            <person name="Katoh Y."/>
            <person name="Shimizu Y."/>
            <person name="Matsuba Y."/>
            <person name="Unemoto T."/>
        </authorList>
    </citation>
    <scope>NUCLEOTIDE SEQUENCE [GENOMIC DNA]</scope>
    <source>
        <strain>138-2</strain>
    </source>
</reference>
<sequence length="185" mass="20581">MNSMSFLISTLFDLYIMVVILRIWLQAARADFYNPFSQFIVKATQPVIGPLRRIIPSVGNIDLATVLFAYVLCVLKFVVLILIASNGSVSFSADFLFLGLLSLIKAAGGLLFWVLLIRAILSWVSQGRSPIEYVFHQLTEPMCAPIRRIIPAIGGLDLSVLVLFIGLQFANFLMGDIIGPIWFQL</sequence>